<accession>A9ADK5</accession>
<name>RL5_BURM1</name>
<reference key="1">
    <citation type="submission" date="2007-10" db="EMBL/GenBank/DDBJ databases">
        <title>Complete sequence of chromosome 1 of Burkholderia multivorans ATCC 17616.</title>
        <authorList>
            <person name="Copeland A."/>
            <person name="Lucas S."/>
            <person name="Lapidus A."/>
            <person name="Barry K."/>
            <person name="Glavina del Rio T."/>
            <person name="Dalin E."/>
            <person name="Tice H."/>
            <person name="Pitluck S."/>
            <person name="Chain P."/>
            <person name="Malfatti S."/>
            <person name="Shin M."/>
            <person name="Vergez L."/>
            <person name="Schmutz J."/>
            <person name="Larimer F."/>
            <person name="Land M."/>
            <person name="Hauser L."/>
            <person name="Kyrpides N."/>
            <person name="Kim E."/>
            <person name="Tiedje J."/>
            <person name="Richardson P."/>
        </authorList>
    </citation>
    <scope>NUCLEOTIDE SEQUENCE [LARGE SCALE GENOMIC DNA]</scope>
    <source>
        <strain>ATCC 17616 / 249</strain>
    </source>
</reference>
<reference key="2">
    <citation type="submission" date="2007-04" db="EMBL/GenBank/DDBJ databases">
        <title>Complete genome sequence of Burkholderia multivorans ATCC 17616.</title>
        <authorList>
            <person name="Ohtsubo Y."/>
            <person name="Yamashita A."/>
            <person name="Kurokawa K."/>
            <person name="Takami H."/>
            <person name="Yuhara S."/>
            <person name="Nishiyama E."/>
            <person name="Endo R."/>
            <person name="Miyazaki R."/>
            <person name="Ono A."/>
            <person name="Yano K."/>
            <person name="Ito M."/>
            <person name="Sota M."/>
            <person name="Yuji N."/>
            <person name="Hattori M."/>
            <person name="Tsuda M."/>
        </authorList>
    </citation>
    <scope>NUCLEOTIDE SEQUENCE [LARGE SCALE GENOMIC DNA]</scope>
    <source>
        <strain>ATCC 17616 / 249</strain>
    </source>
</reference>
<feature type="chain" id="PRO_1000142366" description="Large ribosomal subunit protein uL5">
    <location>
        <begin position="1"/>
        <end position="179"/>
    </location>
</feature>
<organism>
    <name type="scientific">Burkholderia multivorans (strain ATCC 17616 / 249)</name>
    <dbReference type="NCBI Taxonomy" id="395019"/>
    <lineage>
        <taxon>Bacteria</taxon>
        <taxon>Pseudomonadati</taxon>
        <taxon>Pseudomonadota</taxon>
        <taxon>Betaproteobacteria</taxon>
        <taxon>Burkholderiales</taxon>
        <taxon>Burkholderiaceae</taxon>
        <taxon>Burkholderia</taxon>
        <taxon>Burkholderia cepacia complex</taxon>
    </lineage>
</organism>
<comment type="function">
    <text evidence="1">This is one of the proteins that bind and probably mediate the attachment of the 5S RNA into the large ribosomal subunit, where it forms part of the central protuberance. In the 70S ribosome it contacts protein S13 of the 30S subunit (bridge B1b), connecting the 2 subunits; this bridge is implicated in subunit movement. Contacts the P site tRNA; the 5S rRNA and some of its associated proteins might help stabilize positioning of ribosome-bound tRNAs.</text>
</comment>
<comment type="subunit">
    <text evidence="1">Part of the 50S ribosomal subunit; part of the 5S rRNA/L5/L18/L25 subcomplex. Contacts the 5S rRNA and the P site tRNA. Forms a bridge to the 30S subunit in the 70S ribosome.</text>
</comment>
<comment type="similarity">
    <text evidence="1">Belongs to the universal ribosomal protein uL5 family.</text>
</comment>
<keyword id="KW-1185">Reference proteome</keyword>
<keyword id="KW-0687">Ribonucleoprotein</keyword>
<keyword id="KW-0689">Ribosomal protein</keyword>
<keyword id="KW-0694">RNA-binding</keyword>
<keyword id="KW-0699">rRNA-binding</keyword>
<keyword id="KW-0820">tRNA-binding</keyword>
<protein>
    <recommendedName>
        <fullName evidence="1">Large ribosomal subunit protein uL5</fullName>
    </recommendedName>
    <alternativeName>
        <fullName evidence="2">50S ribosomal protein L5</fullName>
    </alternativeName>
</protein>
<sequence>MARLQEFYKEKVVPGLIEKFGYKSVMEVPRITKITLNMGLGEAVADKKIIENAVGDLTKIAGQKPVVTKARKAIAGFKIRQGYPIGAMVTLRGRAMYEFLDRLVTVALPRVRDFRGVSGRAFDGRGNYNIGVKEQIIFPEIDYDKIDALRGLNISITTTAKTDDEAKALLASFKFPFRN</sequence>
<gene>
    <name evidence="1" type="primary">rplE</name>
    <name type="ordered locus">Bmul_0261</name>
    <name type="ordered locus">BMULJ_02993</name>
</gene>
<proteinExistence type="inferred from homology"/>
<evidence type="ECO:0000255" key="1">
    <source>
        <dbReference type="HAMAP-Rule" id="MF_01333"/>
    </source>
</evidence>
<evidence type="ECO:0000305" key="2"/>
<dbReference type="EMBL" id="CP000868">
    <property type="protein sequence ID" value="ABX13956.1"/>
    <property type="molecule type" value="Genomic_DNA"/>
</dbReference>
<dbReference type="EMBL" id="AP009385">
    <property type="protein sequence ID" value="BAG44878.1"/>
    <property type="molecule type" value="Genomic_DNA"/>
</dbReference>
<dbReference type="RefSeq" id="WP_006400649.1">
    <property type="nucleotide sequence ID" value="NC_010804.1"/>
</dbReference>
<dbReference type="SMR" id="A9ADK5"/>
<dbReference type="STRING" id="395019.BMULJ_02993"/>
<dbReference type="GeneID" id="93126531"/>
<dbReference type="KEGG" id="bmj:BMULJ_02993"/>
<dbReference type="KEGG" id="bmu:Bmul_0261"/>
<dbReference type="eggNOG" id="COG0094">
    <property type="taxonomic scope" value="Bacteria"/>
</dbReference>
<dbReference type="HOGENOM" id="CLU_061015_2_1_4"/>
<dbReference type="Proteomes" id="UP000008815">
    <property type="component" value="Chromosome 1"/>
</dbReference>
<dbReference type="GO" id="GO:1990904">
    <property type="term" value="C:ribonucleoprotein complex"/>
    <property type="evidence" value="ECO:0007669"/>
    <property type="project" value="UniProtKB-KW"/>
</dbReference>
<dbReference type="GO" id="GO:0005840">
    <property type="term" value="C:ribosome"/>
    <property type="evidence" value="ECO:0007669"/>
    <property type="project" value="UniProtKB-KW"/>
</dbReference>
<dbReference type="GO" id="GO:0019843">
    <property type="term" value="F:rRNA binding"/>
    <property type="evidence" value="ECO:0007669"/>
    <property type="project" value="UniProtKB-UniRule"/>
</dbReference>
<dbReference type="GO" id="GO:0003735">
    <property type="term" value="F:structural constituent of ribosome"/>
    <property type="evidence" value="ECO:0007669"/>
    <property type="project" value="InterPro"/>
</dbReference>
<dbReference type="GO" id="GO:0000049">
    <property type="term" value="F:tRNA binding"/>
    <property type="evidence" value="ECO:0007669"/>
    <property type="project" value="UniProtKB-UniRule"/>
</dbReference>
<dbReference type="GO" id="GO:0006412">
    <property type="term" value="P:translation"/>
    <property type="evidence" value="ECO:0007669"/>
    <property type="project" value="UniProtKB-UniRule"/>
</dbReference>
<dbReference type="FunFam" id="3.30.1440.10:FF:000001">
    <property type="entry name" value="50S ribosomal protein L5"/>
    <property type="match status" value="1"/>
</dbReference>
<dbReference type="Gene3D" id="3.30.1440.10">
    <property type="match status" value="1"/>
</dbReference>
<dbReference type="HAMAP" id="MF_01333_B">
    <property type="entry name" value="Ribosomal_uL5_B"/>
    <property type="match status" value="1"/>
</dbReference>
<dbReference type="InterPro" id="IPR002132">
    <property type="entry name" value="Ribosomal_uL5"/>
</dbReference>
<dbReference type="InterPro" id="IPR020930">
    <property type="entry name" value="Ribosomal_uL5_bac-type"/>
</dbReference>
<dbReference type="InterPro" id="IPR031309">
    <property type="entry name" value="Ribosomal_uL5_C"/>
</dbReference>
<dbReference type="InterPro" id="IPR020929">
    <property type="entry name" value="Ribosomal_uL5_CS"/>
</dbReference>
<dbReference type="InterPro" id="IPR022803">
    <property type="entry name" value="Ribosomal_uL5_dom_sf"/>
</dbReference>
<dbReference type="InterPro" id="IPR031310">
    <property type="entry name" value="Ribosomal_uL5_N"/>
</dbReference>
<dbReference type="NCBIfam" id="NF000585">
    <property type="entry name" value="PRK00010.1"/>
    <property type="match status" value="1"/>
</dbReference>
<dbReference type="PANTHER" id="PTHR11994">
    <property type="entry name" value="60S RIBOSOMAL PROTEIN L11-RELATED"/>
    <property type="match status" value="1"/>
</dbReference>
<dbReference type="Pfam" id="PF00281">
    <property type="entry name" value="Ribosomal_L5"/>
    <property type="match status" value="1"/>
</dbReference>
<dbReference type="Pfam" id="PF00673">
    <property type="entry name" value="Ribosomal_L5_C"/>
    <property type="match status" value="1"/>
</dbReference>
<dbReference type="PIRSF" id="PIRSF002161">
    <property type="entry name" value="Ribosomal_L5"/>
    <property type="match status" value="1"/>
</dbReference>
<dbReference type="SUPFAM" id="SSF55282">
    <property type="entry name" value="RL5-like"/>
    <property type="match status" value="1"/>
</dbReference>
<dbReference type="PROSITE" id="PS00358">
    <property type="entry name" value="RIBOSOMAL_L5"/>
    <property type="match status" value="1"/>
</dbReference>